<comment type="function">
    <text evidence="1">Required for insertion of 4Fe-4S clusters for at least IspG.</text>
</comment>
<comment type="cofactor">
    <cofactor evidence="1">
        <name>iron-sulfur cluster</name>
        <dbReference type="ChEBI" id="CHEBI:30408"/>
    </cofactor>
    <text evidence="1">Binds 1 iron-sulfur cluster per subunit.</text>
</comment>
<comment type="subunit">
    <text evidence="1">Homodimer.</text>
</comment>
<comment type="similarity">
    <text evidence="1">Belongs to the HesB/IscA family.</text>
</comment>
<comment type="sequence caution" evidence="2">
    <conflict type="erroneous initiation">
        <sequence resource="EMBL-CDS" id="AAW73779"/>
    </conflict>
</comment>
<protein>
    <recommendedName>
        <fullName evidence="1">Iron-sulfur cluster insertion protein ErpA</fullName>
    </recommendedName>
</protein>
<keyword id="KW-0408">Iron</keyword>
<keyword id="KW-0411">Iron-sulfur</keyword>
<keyword id="KW-0479">Metal-binding</keyword>
<keyword id="KW-1185">Reference proteome</keyword>
<dbReference type="EMBL" id="AE013598">
    <property type="protein sequence ID" value="AAW73779.1"/>
    <property type="status" value="ALT_INIT"/>
    <property type="molecule type" value="Genomic_DNA"/>
</dbReference>
<dbReference type="SMR" id="Q5H5J1"/>
<dbReference type="STRING" id="291331.XOO0525"/>
<dbReference type="KEGG" id="xoo:XOO0525"/>
<dbReference type="HOGENOM" id="CLU_069054_5_3_6"/>
<dbReference type="Proteomes" id="UP000006735">
    <property type="component" value="Chromosome"/>
</dbReference>
<dbReference type="GO" id="GO:0005829">
    <property type="term" value="C:cytosol"/>
    <property type="evidence" value="ECO:0007669"/>
    <property type="project" value="TreeGrafter"/>
</dbReference>
<dbReference type="GO" id="GO:0051537">
    <property type="term" value="F:2 iron, 2 sulfur cluster binding"/>
    <property type="evidence" value="ECO:0007669"/>
    <property type="project" value="UniProtKB-ARBA"/>
</dbReference>
<dbReference type="GO" id="GO:0051539">
    <property type="term" value="F:4 iron, 4 sulfur cluster binding"/>
    <property type="evidence" value="ECO:0007669"/>
    <property type="project" value="TreeGrafter"/>
</dbReference>
<dbReference type="GO" id="GO:0005506">
    <property type="term" value="F:iron ion binding"/>
    <property type="evidence" value="ECO:0007669"/>
    <property type="project" value="UniProtKB-UniRule"/>
</dbReference>
<dbReference type="GO" id="GO:0016226">
    <property type="term" value="P:iron-sulfur cluster assembly"/>
    <property type="evidence" value="ECO:0007669"/>
    <property type="project" value="UniProtKB-UniRule"/>
</dbReference>
<dbReference type="FunFam" id="2.60.300.12:FF:000002">
    <property type="entry name" value="Iron-sulfur cluster insertion protein ErpA"/>
    <property type="match status" value="1"/>
</dbReference>
<dbReference type="Gene3D" id="2.60.300.12">
    <property type="entry name" value="HesB-like domain"/>
    <property type="match status" value="1"/>
</dbReference>
<dbReference type="HAMAP" id="MF_01380">
    <property type="entry name" value="Fe_S_insert_ErpA"/>
    <property type="match status" value="1"/>
</dbReference>
<dbReference type="InterPro" id="IPR000361">
    <property type="entry name" value="FeS_biogenesis"/>
</dbReference>
<dbReference type="InterPro" id="IPR016092">
    <property type="entry name" value="FeS_cluster_insertion"/>
</dbReference>
<dbReference type="InterPro" id="IPR017870">
    <property type="entry name" value="FeS_cluster_insertion_CS"/>
</dbReference>
<dbReference type="InterPro" id="IPR023063">
    <property type="entry name" value="FeS_cluster_insertion_RrpA"/>
</dbReference>
<dbReference type="InterPro" id="IPR035903">
    <property type="entry name" value="HesB-like_dom_sf"/>
</dbReference>
<dbReference type="NCBIfam" id="TIGR00049">
    <property type="entry name" value="iron-sulfur cluster assembly accessory protein"/>
    <property type="match status" value="1"/>
</dbReference>
<dbReference type="NCBIfam" id="NF010147">
    <property type="entry name" value="PRK13623.1"/>
    <property type="match status" value="1"/>
</dbReference>
<dbReference type="PANTHER" id="PTHR43011">
    <property type="entry name" value="IRON-SULFUR CLUSTER ASSEMBLY 2 HOMOLOG, MITOCHONDRIAL"/>
    <property type="match status" value="1"/>
</dbReference>
<dbReference type="PANTHER" id="PTHR43011:SF1">
    <property type="entry name" value="IRON-SULFUR CLUSTER ASSEMBLY 2 HOMOLOG, MITOCHONDRIAL"/>
    <property type="match status" value="1"/>
</dbReference>
<dbReference type="Pfam" id="PF01521">
    <property type="entry name" value="Fe-S_biosyn"/>
    <property type="match status" value="1"/>
</dbReference>
<dbReference type="SUPFAM" id="SSF89360">
    <property type="entry name" value="HesB-like domain"/>
    <property type="match status" value="1"/>
</dbReference>
<dbReference type="PROSITE" id="PS01152">
    <property type="entry name" value="HESB"/>
    <property type="match status" value="1"/>
</dbReference>
<sequence length="128" mass="13656">MSTLVSLPTAAPAPDYQSIDRPLHFSVAAAAKVRELIQEEGNADLALRVYIQGGGCSGFQYGFEFDENRAEDDLAVVTDGVTLLVDPLSLQYLMGAEVDYTESLTGAQFVIRNPNAKTTCGCGSSFSV</sequence>
<accession>Q5H5J1</accession>
<proteinExistence type="inferred from homology"/>
<evidence type="ECO:0000255" key="1">
    <source>
        <dbReference type="HAMAP-Rule" id="MF_01380"/>
    </source>
</evidence>
<evidence type="ECO:0000305" key="2"/>
<organism>
    <name type="scientific">Xanthomonas oryzae pv. oryzae (strain KACC10331 / KXO85)</name>
    <dbReference type="NCBI Taxonomy" id="291331"/>
    <lineage>
        <taxon>Bacteria</taxon>
        <taxon>Pseudomonadati</taxon>
        <taxon>Pseudomonadota</taxon>
        <taxon>Gammaproteobacteria</taxon>
        <taxon>Lysobacterales</taxon>
        <taxon>Lysobacteraceae</taxon>
        <taxon>Xanthomonas</taxon>
    </lineage>
</organism>
<reference key="1">
    <citation type="journal article" date="2005" name="Nucleic Acids Res.">
        <title>The genome sequence of Xanthomonas oryzae pathovar oryzae KACC10331, the bacterial blight pathogen of rice.</title>
        <authorList>
            <person name="Lee B.-M."/>
            <person name="Park Y.-J."/>
            <person name="Park D.-S."/>
            <person name="Kang H.-W."/>
            <person name="Kim J.-G."/>
            <person name="Song E.-S."/>
            <person name="Park I.-C."/>
            <person name="Yoon U.-H."/>
            <person name="Hahn J.-H."/>
            <person name="Koo B.-S."/>
            <person name="Lee G.-B."/>
            <person name="Kim H."/>
            <person name="Park H.-S."/>
            <person name="Yoon K.-O."/>
            <person name="Kim J.-H."/>
            <person name="Jung C.-H."/>
            <person name="Koh N.-H."/>
            <person name="Seo J.-S."/>
            <person name="Go S.-J."/>
        </authorList>
    </citation>
    <scope>NUCLEOTIDE SEQUENCE [LARGE SCALE GENOMIC DNA]</scope>
    <source>
        <strain>KACC10331 / KXO85</strain>
    </source>
</reference>
<gene>
    <name evidence="1" type="primary">erpA</name>
    <name type="ordered locus">XOO0525</name>
</gene>
<name>ERPA_XANOR</name>
<feature type="chain" id="PRO_0000311579" description="Iron-sulfur cluster insertion protein ErpA">
    <location>
        <begin position="1"/>
        <end position="128"/>
    </location>
</feature>
<feature type="binding site" evidence="1">
    <location>
        <position position="56"/>
    </location>
    <ligand>
        <name>iron-sulfur cluster</name>
        <dbReference type="ChEBI" id="CHEBI:30408"/>
    </ligand>
</feature>
<feature type="binding site" evidence="1">
    <location>
        <position position="120"/>
    </location>
    <ligand>
        <name>iron-sulfur cluster</name>
        <dbReference type="ChEBI" id="CHEBI:30408"/>
    </ligand>
</feature>
<feature type="binding site" evidence="1">
    <location>
        <position position="122"/>
    </location>
    <ligand>
        <name>iron-sulfur cluster</name>
        <dbReference type="ChEBI" id="CHEBI:30408"/>
    </ligand>
</feature>